<sequence>MNIAVYPGSFDPITNGHLDIIKRASQVFDKVVVGILVNPDKKGLFSIEEREKLISRVVKDMPNVEVRSFSGLLVDFMKEENIKVIIKGLRAMSDFEYEFQMALMNKKLNPDIETLFMMTCAQYSYLSSSSIKQVAMFGGCIKGLVPDEIIEDICKKSNNK</sequence>
<organism>
    <name type="scientific">Clostridium tetani (strain Massachusetts / E88)</name>
    <dbReference type="NCBI Taxonomy" id="212717"/>
    <lineage>
        <taxon>Bacteria</taxon>
        <taxon>Bacillati</taxon>
        <taxon>Bacillota</taxon>
        <taxon>Clostridia</taxon>
        <taxon>Eubacteriales</taxon>
        <taxon>Clostridiaceae</taxon>
        <taxon>Clostridium</taxon>
    </lineage>
</organism>
<comment type="function">
    <text evidence="1">Reversibly transfers an adenylyl group from ATP to 4'-phosphopantetheine, yielding dephospho-CoA (dPCoA) and pyrophosphate.</text>
</comment>
<comment type="catalytic activity">
    <reaction evidence="1">
        <text>(R)-4'-phosphopantetheine + ATP + H(+) = 3'-dephospho-CoA + diphosphate</text>
        <dbReference type="Rhea" id="RHEA:19801"/>
        <dbReference type="ChEBI" id="CHEBI:15378"/>
        <dbReference type="ChEBI" id="CHEBI:30616"/>
        <dbReference type="ChEBI" id="CHEBI:33019"/>
        <dbReference type="ChEBI" id="CHEBI:57328"/>
        <dbReference type="ChEBI" id="CHEBI:61723"/>
        <dbReference type="EC" id="2.7.7.3"/>
    </reaction>
</comment>
<comment type="cofactor">
    <cofactor evidence="1">
        <name>Mg(2+)</name>
        <dbReference type="ChEBI" id="CHEBI:18420"/>
    </cofactor>
</comment>
<comment type="pathway">
    <text evidence="1">Cofactor biosynthesis; coenzyme A biosynthesis; CoA from (R)-pantothenate: step 4/5.</text>
</comment>
<comment type="subunit">
    <text evidence="1">Homohexamer.</text>
</comment>
<comment type="subcellular location">
    <subcellularLocation>
        <location evidence="1">Cytoplasm</location>
    </subcellularLocation>
</comment>
<comment type="similarity">
    <text evidence="1">Belongs to the bacterial CoaD family.</text>
</comment>
<comment type="sequence caution" evidence="2">
    <conflict type="erroneous initiation">
        <sequence resource="EMBL-CDS" id="AAO35802"/>
    </conflict>
</comment>
<feature type="chain" id="PRO_0000156196" description="Phosphopantetheine adenylyltransferase">
    <location>
        <begin position="1"/>
        <end position="160"/>
    </location>
</feature>
<feature type="binding site" evidence="1">
    <location>
        <begin position="9"/>
        <end position="10"/>
    </location>
    <ligand>
        <name>ATP</name>
        <dbReference type="ChEBI" id="CHEBI:30616"/>
    </ligand>
</feature>
<feature type="binding site" evidence="1">
    <location>
        <position position="9"/>
    </location>
    <ligand>
        <name>substrate</name>
    </ligand>
</feature>
<feature type="binding site" evidence="1">
    <location>
        <position position="17"/>
    </location>
    <ligand>
        <name>ATP</name>
        <dbReference type="ChEBI" id="CHEBI:30616"/>
    </ligand>
</feature>
<feature type="binding site" evidence="1">
    <location>
        <position position="41"/>
    </location>
    <ligand>
        <name>substrate</name>
    </ligand>
</feature>
<feature type="binding site" evidence="1">
    <location>
        <position position="73"/>
    </location>
    <ligand>
        <name>substrate</name>
    </ligand>
</feature>
<feature type="binding site" evidence="1">
    <location>
        <position position="87"/>
    </location>
    <ligand>
        <name>substrate</name>
    </ligand>
</feature>
<feature type="binding site" evidence="1">
    <location>
        <begin position="88"/>
        <end position="90"/>
    </location>
    <ligand>
        <name>ATP</name>
        <dbReference type="ChEBI" id="CHEBI:30616"/>
    </ligand>
</feature>
<feature type="binding site" evidence="1">
    <location>
        <position position="98"/>
    </location>
    <ligand>
        <name>ATP</name>
        <dbReference type="ChEBI" id="CHEBI:30616"/>
    </ligand>
</feature>
<feature type="binding site" evidence="1">
    <location>
        <begin position="123"/>
        <end position="129"/>
    </location>
    <ligand>
        <name>ATP</name>
        <dbReference type="ChEBI" id="CHEBI:30616"/>
    </ligand>
</feature>
<feature type="site" description="Transition state stabilizer" evidence="1">
    <location>
        <position position="17"/>
    </location>
</feature>
<evidence type="ECO:0000255" key="1">
    <source>
        <dbReference type="HAMAP-Rule" id="MF_00151"/>
    </source>
</evidence>
<evidence type="ECO:0000305" key="2"/>
<name>COAD_CLOTE</name>
<protein>
    <recommendedName>
        <fullName evidence="1">Phosphopantetheine adenylyltransferase</fullName>
        <ecNumber evidence="1">2.7.7.3</ecNumber>
    </recommendedName>
    <alternativeName>
        <fullName evidence="1">Dephospho-CoA pyrophosphorylase</fullName>
    </alternativeName>
    <alternativeName>
        <fullName evidence="1">Pantetheine-phosphate adenylyltransferase</fullName>
        <shortName evidence="1">PPAT</shortName>
    </alternativeName>
</protein>
<reference key="1">
    <citation type="journal article" date="2003" name="Proc. Natl. Acad. Sci. U.S.A.">
        <title>The genome sequence of Clostridium tetani, the causative agent of tetanus disease.</title>
        <authorList>
            <person name="Brueggemann H."/>
            <person name="Baeumer S."/>
            <person name="Fricke W.F."/>
            <person name="Wiezer A."/>
            <person name="Liesegang H."/>
            <person name="Decker I."/>
            <person name="Herzberg C."/>
            <person name="Martinez-Arias R."/>
            <person name="Merkl R."/>
            <person name="Henne A."/>
            <person name="Gottschalk G."/>
        </authorList>
    </citation>
    <scope>NUCLEOTIDE SEQUENCE [LARGE SCALE GENOMIC DNA]</scope>
    <source>
        <strain>Massachusetts / E88</strain>
    </source>
</reference>
<gene>
    <name evidence="1" type="primary">coaD</name>
    <name type="ordered locus">CTC_01234</name>
</gene>
<dbReference type="EC" id="2.7.7.3" evidence="1"/>
<dbReference type="EMBL" id="AE015927">
    <property type="protein sequence ID" value="AAO35802.1"/>
    <property type="status" value="ALT_INIT"/>
    <property type="molecule type" value="Genomic_DNA"/>
</dbReference>
<dbReference type="RefSeq" id="WP_035124889.1">
    <property type="nucleotide sequence ID" value="NC_004557.1"/>
</dbReference>
<dbReference type="SMR" id="Q895N8"/>
<dbReference type="STRING" id="212717.CTC_01234"/>
<dbReference type="GeneID" id="24252871"/>
<dbReference type="KEGG" id="ctc:CTC_01234"/>
<dbReference type="HOGENOM" id="CLU_100149_0_1_9"/>
<dbReference type="OrthoDB" id="9806661at2"/>
<dbReference type="UniPathway" id="UPA00241">
    <property type="reaction ID" value="UER00355"/>
</dbReference>
<dbReference type="Proteomes" id="UP000001412">
    <property type="component" value="Chromosome"/>
</dbReference>
<dbReference type="GO" id="GO:0005737">
    <property type="term" value="C:cytoplasm"/>
    <property type="evidence" value="ECO:0007669"/>
    <property type="project" value="UniProtKB-SubCell"/>
</dbReference>
<dbReference type="GO" id="GO:0005524">
    <property type="term" value="F:ATP binding"/>
    <property type="evidence" value="ECO:0007669"/>
    <property type="project" value="UniProtKB-KW"/>
</dbReference>
<dbReference type="GO" id="GO:0004595">
    <property type="term" value="F:pantetheine-phosphate adenylyltransferase activity"/>
    <property type="evidence" value="ECO:0007669"/>
    <property type="project" value="UniProtKB-UniRule"/>
</dbReference>
<dbReference type="GO" id="GO:0015937">
    <property type="term" value="P:coenzyme A biosynthetic process"/>
    <property type="evidence" value="ECO:0007669"/>
    <property type="project" value="UniProtKB-UniRule"/>
</dbReference>
<dbReference type="CDD" id="cd02163">
    <property type="entry name" value="PPAT"/>
    <property type="match status" value="1"/>
</dbReference>
<dbReference type="Gene3D" id="3.40.50.620">
    <property type="entry name" value="HUPs"/>
    <property type="match status" value="1"/>
</dbReference>
<dbReference type="HAMAP" id="MF_00151">
    <property type="entry name" value="PPAT_bact"/>
    <property type="match status" value="1"/>
</dbReference>
<dbReference type="InterPro" id="IPR004821">
    <property type="entry name" value="Cyt_trans-like"/>
</dbReference>
<dbReference type="InterPro" id="IPR001980">
    <property type="entry name" value="PPAT"/>
</dbReference>
<dbReference type="InterPro" id="IPR014729">
    <property type="entry name" value="Rossmann-like_a/b/a_fold"/>
</dbReference>
<dbReference type="NCBIfam" id="TIGR01510">
    <property type="entry name" value="coaD_prev_kdtB"/>
    <property type="match status" value="1"/>
</dbReference>
<dbReference type="NCBIfam" id="TIGR00125">
    <property type="entry name" value="cyt_tran_rel"/>
    <property type="match status" value="1"/>
</dbReference>
<dbReference type="PANTHER" id="PTHR21342">
    <property type="entry name" value="PHOSPHOPANTETHEINE ADENYLYLTRANSFERASE"/>
    <property type="match status" value="1"/>
</dbReference>
<dbReference type="PANTHER" id="PTHR21342:SF1">
    <property type="entry name" value="PHOSPHOPANTETHEINE ADENYLYLTRANSFERASE"/>
    <property type="match status" value="1"/>
</dbReference>
<dbReference type="Pfam" id="PF01467">
    <property type="entry name" value="CTP_transf_like"/>
    <property type="match status" value="1"/>
</dbReference>
<dbReference type="PRINTS" id="PR01020">
    <property type="entry name" value="LPSBIOSNTHSS"/>
</dbReference>
<dbReference type="SUPFAM" id="SSF52374">
    <property type="entry name" value="Nucleotidylyl transferase"/>
    <property type="match status" value="1"/>
</dbReference>
<keyword id="KW-0067">ATP-binding</keyword>
<keyword id="KW-0173">Coenzyme A biosynthesis</keyword>
<keyword id="KW-0963">Cytoplasm</keyword>
<keyword id="KW-0460">Magnesium</keyword>
<keyword id="KW-0547">Nucleotide-binding</keyword>
<keyword id="KW-0548">Nucleotidyltransferase</keyword>
<keyword id="KW-1185">Reference proteome</keyword>
<keyword id="KW-0808">Transferase</keyword>
<accession>Q895N8</accession>
<proteinExistence type="inferred from homology"/>